<proteinExistence type="evidence at protein level"/>
<organism>
    <name type="scientific">Rattus norvegicus</name>
    <name type="common">Rat</name>
    <dbReference type="NCBI Taxonomy" id="10116"/>
    <lineage>
        <taxon>Eukaryota</taxon>
        <taxon>Metazoa</taxon>
        <taxon>Chordata</taxon>
        <taxon>Craniata</taxon>
        <taxon>Vertebrata</taxon>
        <taxon>Euteleostomi</taxon>
        <taxon>Mammalia</taxon>
        <taxon>Eutheria</taxon>
        <taxon>Euarchontoglires</taxon>
        <taxon>Glires</taxon>
        <taxon>Rodentia</taxon>
        <taxon>Myomorpha</taxon>
        <taxon>Muroidea</taxon>
        <taxon>Muridae</taxon>
        <taxon>Murinae</taxon>
        <taxon>Rattus</taxon>
    </lineage>
</organism>
<evidence type="ECO:0000250" key="1">
    <source>
        <dbReference type="UniProtKB" id="Q9Y5S8"/>
    </source>
</evidence>
<evidence type="ECO:0000255" key="2"/>
<evidence type="ECO:0000255" key="3">
    <source>
        <dbReference type="PROSITE-ProRule" id="PRU00716"/>
    </source>
</evidence>
<evidence type="ECO:0000269" key="4">
    <source>
    </source>
</evidence>
<evidence type="ECO:0000269" key="5">
    <source>
    </source>
</evidence>
<evidence type="ECO:0000305" key="6"/>
<protein>
    <recommendedName>
        <fullName>NADPH oxidase 1</fullName>
        <shortName>NOX-1</shortName>
        <ecNumber evidence="4 5">1.6.3.-</ecNumber>
    </recommendedName>
    <alternativeName>
        <fullName>Mitogenic oxidase 1</fullName>
        <shortName>MOX-1</shortName>
    </alternativeName>
    <alternativeName>
        <fullName>NADH/NADPH mitogenic oxidase subunit P65-MOX</fullName>
    </alternativeName>
    <alternativeName>
        <fullName>NOH-1</fullName>
    </alternativeName>
</protein>
<keyword id="KW-0965">Cell junction</keyword>
<keyword id="KW-1003">Cell membrane</keyword>
<keyword id="KW-0966">Cell projection</keyword>
<keyword id="KW-0249">Electron transport</keyword>
<keyword id="KW-0274">FAD</keyword>
<keyword id="KW-0285">Flavoprotein</keyword>
<keyword id="KW-0325">Glycoprotein</keyword>
<keyword id="KW-0349">Heme</keyword>
<keyword id="KW-0408">Iron</keyword>
<keyword id="KW-0472">Membrane</keyword>
<keyword id="KW-0479">Metal-binding</keyword>
<keyword id="KW-0521">NADP</keyword>
<keyword id="KW-0560">Oxidoreductase</keyword>
<keyword id="KW-0597">Phosphoprotein</keyword>
<keyword id="KW-1185">Reference proteome</keyword>
<keyword id="KW-0812">Transmembrane</keyword>
<keyword id="KW-1133">Transmembrane helix</keyword>
<keyword id="KW-0813">Transport</keyword>
<name>NOX1_RAT</name>
<dbReference type="EC" id="1.6.3.-" evidence="4 5"/>
<dbReference type="EMBL" id="AF152963">
    <property type="protein sequence ID" value="AAD39542.1"/>
    <property type="molecule type" value="mRNA"/>
</dbReference>
<dbReference type="RefSeq" id="NP_446135.1">
    <property type="nucleotide sequence ID" value="NM_053683.1"/>
</dbReference>
<dbReference type="SMR" id="Q9WV87"/>
<dbReference type="FunCoup" id="Q9WV87">
    <property type="interactions" value="9"/>
</dbReference>
<dbReference type="STRING" id="10116.ENSRNOP00000065995"/>
<dbReference type="ChEMBL" id="CHEMBL1075231"/>
<dbReference type="PeroxiBase" id="5408">
    <property type="entry name" value="RnoNOx01"/>
</dbReference>
<dbReference type="GlyCosmos" id="Q9WV87">
    <property type="glycosylation" value="2 sites, No reported glycans"/>
</dbReference>
<dbReference type="GlyGen" id="Q9WV87">
    <property type="glycosylation" value="2 sites"/>
</dbReference>
<dbReference type="iPTMnet" id="Q9WV87"/>
<dbReference type="PhosphoSitePlus" id="Q9WV87"/>
<dbReference type="PaxDb" id="10116-ENSRNOP00000065995"/>
<dbReference type="GeneID" id="114243"/>
<dbReference type="KEGG" id="rno:114243"/>
<dbReference type="AGR" id="RGD:620598"/>
<dbReference type="CTD" id="27035"/>
<dbReference type="RGD" id="620598">
    <property type="gene designation" value="Nox1"/>
</dbReference>
<dbReference type="eggNOG" id="KOG0039">
    <property type="taxonomic scope" value="Eukaryota"/>
</dbReference>
<dbReference type="InParanoid" id="Q9WV87"/>
<dbReference type="PhylomeDB" id="Q9WV87"/>
<dbReference type="Reactome" id="R-RNO-5668599">
    <property type="pathway name" value="RHO GTPases Activate NADPH Oxidases"/>
</dbReference>
<dbReference type="Reactome" id="R-RNO-9013149">
    <property type="pathway name" value="RAC1 GTPase cycle"/>
</dbReference>
<dbReference type="PRO" id="PR:Q9WV87"/>
<dbReference type="Proteomes" id="UP000002494">
    <property type="component" value="Unplaced"/>
</dbReference>
<dbReference type="GO" id="GO:0070161">
    <property type="term" value="C:anchoring junction"/>
    <property type="evidence" value="ECO:0007669"/>
    <property type="project" value="UniProtKB-KW"/>
</dbReference>
<dbReference type="GO" id="GO:0042995">
    <property type="term" value="C:cell projection"/>
    <property type="evidence" value="ECO:0007669"/>
    <property type="project" value="UniProtKB-SubCell"/>
</dbReference>
<dbReference type="GO" id="GO:0005737">
    <property type="term" value="C:cytoplasm"/>
    <property type="evidence" value="ECO:0000266"/>
    <property type="project" value="RGD"/>
</dbReference>
<dbReference type="GO" id="GO:0005769">
    <property type="term" value="C:early endosome"/>
    <property type="evidence" value="ECO:0000266"/>
    <property type="project" value="RGD"/>
</dbReference>
<dbReference type="GO" id="GO:0005768">
    <property type="term" value="C:endosome"/>
    <property type="evidence" value="ECO:0000266"/>
    <property type="project" value="RGD"/>
</dbReference>
<dbReference type="GO" id="GO:0043020">
    <property type="term" value="C:NADPH oxidase complex"/>
    <property type="evidence" value="ECO:0000314"/>
    <property type="project" value="RGD"/>
</dbReference>
<dbReference type="GO" id="GO:0005886">
    <property type="term" value="C:plasma membrane"/>
    <property type="evidence" value="ECO:0000266"/>
    <property type="project" value="RGD"/>
</dbReference>
<dbReference type="GO" id="GO:0046872">
    <property type="term" value="F:metal ion binding"/>
    <property type="evidence" value="ECO:0007669"/>
    <property type="project" value="UniProtKB-KW"/>
</dbReference>
<dbReference type="GO" id="GO:0016174">
    <property type="term" value="F:NAD(P)H oxidase H2O2-forming activity"/>
    <property type="evidence" value="ECO:0000315"/>
    <property type="project" value="CACAO"/>
</dbReference>
<dbReference type="GO" id="GO:0031267">
    <property type="term" value="F:small GTPase binding"/>
    <property type="evidence" value="ECO:0000266"/>
    <property type="project" value="RGD"/>
</dbReference>
<dbReference type="GO" id="GO:0016175">
    <property type="term" value="F:superoxide-generating NAD(P)H oxidase activity"/>
    <property type="evidence" value="ECO:0000314"/>
    <property type="project" value="UniProtKB"/>
</dbReference>
<dbReference type="GO" id="GO:0106292">
    <property type="term" value="F:superoxide-generating NADPH oxidase activity"/>
    <property type="evidence" value="ECO:0007669"/>
    <property type="project" value="RHEA"/>
</dbReference>
<dbReference type="GO" id="GO:0001525">
    <property type="term" value="P:angiogenesis"/>
    <property type="evidence" value="ECO:0000266"/>
    <property type="project" value="RGD"/>
</dbReference>
<dbReference type="GO" id="GO:0060326">
    <property type="term" value="P:cell chemotaxis"/>
    <property type="evidence" value="ECO:0000315"/>
    <property type="project" value="RGD"/>
</dbReference>
<dbReference type="GO" id="GO:0016477">
    <property type="term" value="P:cell migration"/>
    <property type="evidence" value="ECO:0000266"/>
    <property type="project" value="RGD"/>
</dbReference>
<dbReference type="GO" id="GO:1904385">
    <property type="term" value="P:cellular response to angiotensin"/>
    <property type="evidence" value="ECO:0000270"/>
    <property type="project" value="RGD"/>
</dbReference>
<dbReference type="GO" id="GO:0071455">
    <property type="term" value="P:cellular response to hyperoxia"/>
    <property type="evidence" value="ECO:0000266"/>
    <property type="project" value="RGD"/>
</dbReference>
<dbReference type="GO" id="GO:0071347">
    <property type="term" value="P:cellular response to interleukin-1"/>
    <property type="evidence" value="ECO:0000270"/>
    <property type="project" value="RGD"/>
</dbReference>
<dbReference type="GO" id="GO:0071288">
    <property type="term" value="P:cellular response to mercury ion"/>
    <property type="evidence" value="ECO:0000270"/>
    <property type="project" value="RGD"/>
</dbReference>
<dbReference type="GO" id="GO:0036120">
    <property type="term" value="P:cellular response to platelet-derived growth factor stimulus"/>
    <property type="evidence" value="ECO:0000270"/>
    <property type="project" value="RGD"/>
</dbReference>
<dbReference type="GO" id="GO:0006952">
    <property type="term" value="P:defense response"/>
    <property type="evidence" value="ECO:0000318"/>
    <property type="project" value="GO_Central"/>
</dbReference>
<dbReference type="GO" id="GO:0030198">
    <property type="term" value="P:extracellular matrix organization"/>
    <property type="evidence" value="ECO:0000266"/>
    <property type="project" value="RGD"/>
</dbReference>
<dbReference type="GO" id="GO:0006749">
    <property type="term" value="P:glutathione metabolic process"/>
    <property type="evidence" value="ECO:0000315"/>
    <property type="project" value="RGD"/>
</dbReference>
<dbReference type="GO" id="GO:0042743">
    <property type="term" value="P:hydrogen peroxide metabolic process"/>
    <property type="evidence" value="ECO:0000266"/>
    <property type="project" value="RGD"/>
</dbReference>
<dbReference type="GO" id="GO:0008631">
    <property type="term" value="P:intrinsic apoptotic signaling pathway in response to oxidative stress"/>
    <property type="evidence" value="ECO:0000266"/>
    <property type="project" value="RGD"/>
</dbReference>
<dbReference type="GO" id="GO:0007254">
    <property type="term" value="P:JNK cascade"/>
    <property type="evidence" value="ECO:0000266"/>
    <property type="project" value="RGD"/>
</dbReference>
<dbReference type="GO" id="GO:0000165">
    <property type="term" value="P:MAPK cascade"/>
    <property type="evidence" value="ECO:0000266"/>
    <property type="project" value="RGD"/>
</dbReference>
<dbReference type="GO" id="GO:0014043">
    <property type="term" value="P:negative regulation of neuron maturation"/>
    <property type="evidence" value="ECO:0000315"/>
    <property type="project" value="RGD"/>
</dbReference>
<dbReference type="GO" id="GO:0072592">
    <property type="term" value="P:oxygen metabolic process"/>
    <property type="evidence" value="ECO:0000266"/>
    <property type="project" value="RGD"/>
</dbReference>
<dbReference type="GO" id="GO:0008284">
    <property type="term" value="P:positive regulation of cell population proliferation"/>
    <property type="evidence" value="ECO:0000266"/>
    <property type="project" value="RGD"/>
</dbReference>
<dbReference type="GO" id="GO:0090261">
    <property type="term" value="P:positive regulation of inclusion body assembly"/>
    <property type="evidence" value="ECO:0000315"/>
    <property type="project" value="RGD"/>
</dbReference>
<dbReference type="GO" id="GO:0045726">
    <property type="term" value="P:positive regulation of integrin biosynthetic process"/>
    <property type="evidence" value="ECO:0000266"/>
    <property type="project" value="RGD"/>
</dbReference>
<dbReference type="GO" id="GO:0046330">
    <property type="term" value="P:positive regulation of JNK cascade"/>
    <property type="evidence" value="ECO:0000266"/>
    <property type="project" value="RGD"/>
</dbReference>
<dbReference type="GO" id="GO:0043410">
    <property type="term" value="P:positive regulation of MAPK cascade"/>
    <property type="evidence" value="ECO:0000266"/>
    <property type="project" value="RGD"/>
</dbReference>
<dbReference type="GO" id="GO:0043525">
    <property type="term" value="P:positive regulation of neuron apoptotic process"/>
    <property type="evidence" value="ECO:0000315"/>
    <property type="project" value="RGD"/>
</dbReference>
<dbReference type="GO" id="GO:0010976">
    <property type="term" value="P:positive regulation of neuron projection development"/>
    <property type="evidence" value="ECO:0000315"/>
    <property type="project" value="RGD"/>
</dbReference>
<dbReference type="GO" id="GO:1902177">
    <property type="term" value="P:positive regulation of oxidative stress-induced intrinsic apoptotic signaling pathway"/>
    <property type="evidence" value="ECO:0000266"/>
    <property type="project" value="RGD"/>
</dbReference>
<dbReference type="GO" id="GO:2000379">
    <property type="term" value="P:positive regulation of reactive oxygen species metabolic process"/>
    <property type="evidence" value="ECO:0000315"/>
    <property type="project" value="RGD"/>
</dbReference>
<dbReference type="GO" id="GO:0048661">
    <property type="term" value="P:positive regulation of smooth muscle cell proliferation"/>
    <property type="evidence" value="ECO:0000315"/>
    <property type="project" value="BHF-UCL"/>
</dbReference>
<dbReference type="GO" id="GO:0032930">
    <property type="term" value="P:positive regulation of superoxide anion generation"/>
    <property type="evidence" value="ECO:0000315"/>
    <property type="project" value="RGD"/>
</dbReference>
<dbReference type="GO" id="GO:1904754">
    <property type="term" value="P:positive regulation of vascular associated smooth muscle cell migration"/>
    <property type="evidence" value="ECO:0000315"/>
    <property type="project" value="RGD"/>
</dbReference>
<dbReference type="GO" id="GO:1904707">
    <property type="term" value="P:positive regulation of vascular associated smooth muscle cell proliferation"/>
    <property type="evidence" value="ECO:0000315"/>
    <property type="project" value="RGD"/>
</dbReference>
<dbReference type="GO" id="GO:0010575">
    <property type="term" value="P:positive regulation of vascular endothelial growth factor production"/>
    <property type="evidence" value="ECO:0000266"/>
    <property type="project" value="RGD"/>
</dbReference>
<dbReference type="GO" id="GO:0003081">
    <property type="term" value="P:regulation of systemic arterial blood pressure by renin-angiotensin"/>
    <property type="evidence" value="ECO:0000266"/>
    <property type="project" value="RGD"/>
</dbReference>
<dbReference type="GO" id="GO:0000302">
    <property type="term" value="P:response to reactive oxygen species"/>
    <property type="evidence" value="ECO:0000314"/>
    <property type="project" value="RGD"/>
</dbReference>
<dbReference type="GO" id="GO:0042554">
    <property type="term" value="P:superoxide anion generation"/>
    <property type="evidence" value="ECO:0000315"/>
    <property type="project" value="BHF-UCL"/>
</dbReference>
<dbReference type="CDD" id="cd06186">
    <property type="entry name" value="NOX_Duox_like_FAD_NADP"/>
    <property type="match status" value="1"/>
</dbReference>
<dbReference type="FunFam" id="2.40.30.10:FF:000030">
    <property type="entry name" value="cytochrome b-245 heavy chain"/>
    <property type="match status" value="1"/>
</dbReference>
<dbReference type="FunFam" id="3.40.50.80:FF:000004">
    <property type="entry name" value="NADPH oxidase isoform 2"/>
    <property type="match status" value="1"/>
</dbReference>
<dbReference type="Gene3D" id="3.40.50.80">
    <property type="entry name" value="Nucleotide-binding domain of ferredoxin-NADP reductase (FNR) module"/>
    <property type="match status" value="1"/>
</dbReference>
<dbReference type="Gene3D" id="2.40.30.10">
    <property type="entry name" value="Translation factors"/>
    <property type="match status" value="1"/>
</dbReference>
<dbReference type="InterPro" id="IPR000778">
    <property type="entry name" value="Cyt_b245_heavy_chain"/>
</dbReference>
<dbReference type="InterPro" id="IPR013112">
    <property type="entry name" value="FAD-bd_8"/>
</dbReference>
<dbReference type="InterPro" id="IPR017927">
    <property type="entry name" value="FAD-bd_FR_type"/>
</dbReference>
<dbReference type="InterPro" id="IPR013130">
    <property type="entry name" value="Fe3_Rdtase_TM_dom"/>
</dbReference>
<dbReference type="InterPro" id="IPR013121">
    <property type="entry name" value="Fe_red_NAD-bd_6"/>
</dbReference>
<dbReference type="InterPro" id="IPR039261">
    <property type="entry name" value="FNR_nucleotide-bd"/>
</dbReference>
<dbReference type="InterPro" id="IPR050369">
    <property type="entry name" value="RBOH/FRE"/>
</dbReference>
<dbReference type="InterPro" id="IPR017938">
    <property type="entry name" value="Riboflavin_synthase-like_b-brl"/>
</dbReference>
<dbReference type="PANTHER" id="PTHR11972">
    <property type="entry name" value="NADPH OXIDASE"/>
    <property type="match status" value="1"/>
</dbReference>
<dbReference type="PANTHER" id="PTHR11972:SF71">
    <property type="entry name" value="NADPH OXIDASE 1"/>
    <property type="match status" value="1"/>
</dbReference>
<dbReference type="Pfam" id="PF08022">
    <property type="entry name" value="FAD_binding_8"/>
    <property type="match status" value="1"/>
</dbReference>
<dbReference type="Pfam" id="PF01794">
    <property type="entry name" value="Ferric_reduct"/>
    <property type="match status" value="1"/>
</dbReference>
<dbReference type="Pfam" id="PF08030">
    <property type="entry name" value="NAD_binding_6"/>
    <property type="match status" value="1"/>
</dbReference>
<dbReference type="PRINTS" id="PR00466">
    <property type="entry name" value="GP91PHOX"/>
</dbReference>
<dbReference type="SFLD" id="SFLDS00052">
    <property type="entry name" value="Ferric_Reductase_Domain"/>
    <property type="match status" value="1"/>
</dbReference>
<dbReference type="SFLD" id="SFLDG01168">
    <property type="entry name" value="Ferric_reductase_subgroup_(FRE"/>
    <property type="match status" value="1"/>
</dbReference>
<dbReference type="SUPFAM" id="SSF52343">
    <property type="entry name" value="Ferredoxin reductase-like, C-terminal NADP-linked domain"/>
    <property type="match status" value="1"/>
</dbReference>
<dbReference type="SUPFAM" id="SSF63380">
    <property type="entry name" value="Riboflavin synthase domain-like"/>
    <property type="match status" value="1"/>
</dbReference>
<dbReference type="PROSITE" id="PS51384">
    <property type="entry name" value="FAD_FR"/>
    <property type="match status" value="1"/>
</dbReference>
<sequence length="563" mass="65177">MGNWLVNHWLSVLFLVSWLGLNIFLFVYVFLNYEKSDKYYYTREILGTALALARASALCLNFNSMVILIPVCRNLLSFLRGTCSFCNHTLRKPLDHNLTFHKLVAYMICIFTAIHIIAHLFNFERYSRSQQAMDGSLASVLSSLFHPEKEDSWLNPIQSPNVTVMYAAFTSIAGLTGVVATVALVLMVTSAMEFIRRNYFELFWYTHHLFIIYIICLGIHGLGGIVRGQTEESMSESHPRNCSYSFHEWDKYERSCRSPHFVGQPPESWKWILAPIAFYIFERILRFYRSRQKVVITKVVMHPCKVLELQMRKRGFTMGIGQYIFVNCPSISFLEWHPFTLTSAPEEEFFSIHIRAAGDWTENLIRTFEQQHSPMPRIEVDGPFGTVSEDVFQYEVAVLVGAGIGVTPFASFLKSIWYKFQRAHNKLKTQKIYFYWICRETGAFAWFNNLLNSLEQEMDELGKPDFLNYRLFLTGWDSNIAGHAALNFDRATDVLTGLKQKTSFGRPMWDNEFSRIATAHPKSVVGVFLCGPPTLAKSLRKCCRRYSSLDPRKVQFYFNKETF</sequence>
<gene>
    <name type="primary">Nox1</name>
    <name type="synonym">Mox1</name>
    <name type="synonym">Noh1</name>
</gene>
<comment type="function">
    <text evidence="4 5">NADPH oxidase that catalyzes the generation of superoxide from molecular oxygen utilizing NADPH as an electron donor.</text>
</comment>
<comment type="catalytic activity">
    <reaction evidence="4 5">
        <text>NADPH + 2 O2 = 2 superoxide + NADP(+) + H(+)</text>
        <dbReference type="Rhea" id="RHEA:63180"/>
        <dbReference type="ChEBI" id="CHEBI:15378"/>
        <dbReference type="ChEBI" id="CHEBI:15379"/>
        <dbReference type="ChEBI" id="CHEBI:18421"/>
        <dbReference type="ChEBI" id="CHEBI:57783"/>
        <dbReference type="ChEBI" id="CHEBI:58349"/>
    </reaction>
</comment>
<comment type="cofactor">
    <cofactor evidence="6">
        <name>FAD</name>
        <dbReference type="ChEBI" id="CHEBI:57692"/>
    </cofactor>
</comment>
<comment type="activity regulation">
    <text evidence="1">The oxidase activity is potentiated by NOXA1 and NOXO1.</text>
</comment>
<comment type="subunit">
    <text evidence="1 5">NOX1, NOXA1, NOXO1, RAC1 and CYBA forms a functional multimeric complex supporting ROS production. Interacts with NOXO1. Interacts (via FAD-binding FR-type domain) with ARHGEF7 (via PH domain) (By similarity). The phosphorylated form at Thr-429 interacts with NOXA1 with greater affinity (PubMed:25228390).</text>
</comment>
<comment type="subcellular location">
    <subcellularLocation>
        <location evidence="1">Cell projection</location>
        <location evidence="1">Invadopodium membrane</location>
        <topology evidence="2">Multi-pass membrane protein</topology>
    </subcellularLocation>
    <subcellularLocation>
        <location evidence="1">Cell membrane</location>
        <topology evidence="2">Multi-pass membrane protein</topology>
    </subcellularLocation>
</comment>
<comment type="tissue specificity">
    <text evidence="4">Expressed in vascular smooth muscle cells.</text>
</comment>
<comment type="PTM">
    <text evidence="5">Phosphorylation at Thr-429 mediated by PKC/PRKBC positively regulates its interaction with NOXA1 and enzyme activity.</text>
</comment>
<accession>Q9WV87</accession>
<reference key="1">
    <citation type="journal article" date="1999" name="Nature">
        <title>Cell transformation by the superoxide-generating oxidase Mox1.</title>
        <authorList>
            <person name="Suh Y.-A."/>
            <person name="Arnold R.S."/>
            <person name="Lassegue B."/>
            <person name="Shi J."/>
            <person name="Xu X."/>
            <person name="Sorescu D."/>
            <person name="Chung A.B."/>
            <person name="Griendling K.K."/>
            <person name="Lambeth J.D."/>
        </authorList>
    </citation>
    <scope>NUCLEOTIDE SEQUENCE [MRNA]</scope>
    <scope>FUNCTION</scope>
    <scope>CATALYTIC ACTIVITY</scope>
    <scope>TISSUE SPECIFICITY</scope>
    <source>
        <tissue>Colon epithelium</tissue>
    </source>
</reference>
<reference key="2">
    <citation type="journal article" date="2014" name="Circ. Res.">
        <title>Phosphorylation of Nox1 regulates association with NoxA1 activation domain.</title>
        <authorList>
            <person name="Streeter J."/>
            <person name="Schickling B.M."/>
            <person name="Jiang S."/>
            <person name="Stanic B."/>
            <person name="Thiel W.H."/>
            <person name="Gakhar L."/>
            <person name="Houtman J.C."/>
            <person name="Miller F.J. Jr."/>
        </authorList>
    </citation>
    <scope>FUNCTION</scope>
    <scope>CATALYTIC ACTIVITY</scope>
    <scope>INTERACTION WITH NOXA1</scope>
    <scope>PHOSPHORYLATION AT THR-429</scope>
    <scope>MUTAGENESIS OF THR-89 AND THR-429</scope>
</reference>
<feature type="chain" id="PRO_0000210149" description="NADPH oxidase 1">
    <location>
        <begin position="1"/>
        <end position="563"/>
    </location>
</feature>
<feature type="topological domain" description="Cytoplasmic" evidence="2">
    <location>
        <begin position="1"/>
        <end position="8"/>
    </location>
</feature>
<feature type="transmembrane region" description="Helical" evidence="2">
    <location>
        <begin position="9"/>
        <end position="31"/>
    </location>
</feature>
<feature type="topological domain" description="Extracellular" evidence="2">
    <location>
        <begin position="32"/>
        <end position="44"/>
    </location>
</feature>
<feature type="transmembrane region" description="Helical" evidence="2">
    <location>
        <begin position="45"/>
        <end position="69"/>
    </location>
</feature>
<feature type="topological domain" description="Cytoplasmic" evidence="2">
    <location>
        <begin position="70"/>
        <end position="102"/>
    </location>
</feature>
<feature type="transmembrane region" description="Helical" evidence="2">
    <location>
        <begin position="103"/>
        <end position="123"/>
    </location>
</feature>
<feature type="topological domain" description="Extracellular" evidence="2">
    <location>
        <begin position="124"/>
        <end position="167"/>
    </location>
</feature>
<feature type="transmembrane region" description="Helical" evidence="2">
    <location>
        <begin position="168"/>
        <end position="188"/>
    </location>
</feature>
<feature type="topological domain" description="Cytoplasmic" evidence="2">
    <location>
        <begin position="189"/>
        <end position="206"/>
    </location>
</feature>
<feature type="transmembrane region" description="Helical" evidence="2">
    <location>
        <begin position="207"/>
        <end position="227"/>
    </location>
</feature>
<feature type="topological domain" description="Extracellular" evidence="2">
    <location>
        <begin position="228"/>
        <end position="395"/>
    </location>
</feature>
<feature type="transmembrane region" description="Helical" evidence="2">
    <location>
        <begin position="396"/>
        <end position="416"/>
    </location>
</feature>
<feature type="topological domain" description="Cytoplasmic" evidence="2">
    <location>
        <begin position="417"/>
        <end position="563"/>
    </location>
</feature>
<feature type="domain" description="Ferric oxidoreductase">
    <location>
        <begin position="54"/>
        <end position="282"/>
    </location>
</feature>
<feature type="domain" description="FAD-binding FR-type" evidence="3">
    <location>
        <begin position="283"/>
        <end position="390"/>
    </location>
</feature>
<feature type="region of interest" description="Interaction with NOXO1" evidence="1">
    <location>
        <begin position="396"/>
        <end position="535"/>
    </location>
</feature>
<feature type="binding site" description="axial binding residue" evidence="6">
    <location>
        <position position="101"/>
    </location>
    <ligand>
        <name>heme</name>
        <dbReference type="ChEBI" id="CHEBI:30413"/>
    </ligand>
    <ligandPart>
        <name>Fe</name>
        <dbReference type="ChEBI" id="CHEBI:18248"/>
    </ligandPart>
</feature>
<feature type="binding site" description="axial binding residue" evidence="6">
    <location>
        <position position="115"/>
    </location>
    <ligand>
        <name>heme</name>
        <dbReference type="ChEBI" id="CHEBI:30413"/>
    </ligand>
    <ligandPart>
        <name>Fe</name>
        <dbReference type="ChEBI" id="CHEBI:18248"/>
    </ligandPart>
</feature>
<feature type="binding site" description="axial binding residue" evidence="6">
    <location>
        <position position="208"/>
    </location>
    <ligand>
        <name>heme</name>
        <dbReference type="ChEBI" id="CHEBI:30413"/>
    </ligand>
    <ligandPart>
        <name>Fe</name>
        <dbReference type="ChEBI" id="CHEBI:18248"/>
    </ligandPart>
</feature>
<feature type="binding site" description="axial binding residue" evidence="6">
    <location>
        <position position="220"/>
    </location>
    <ligand>
        <name>heme</name>
        <dbReference type="ChEBI" id="CHEBI:30413"/>
    </ligand>
    <ligandPart>
        <name>Fe</name>
        <dbReference type="ChEBI" id="CHEBI:18248"/>
    </ligandPart>
</feature>
<feature type="binding site" evidence="2">
    <location>
        <begin position="337"/>
        <end position="343"/>
    </location>
    <ligand>
        <name>FAD</name>
        <dbReference type="ChEBI" id="CHEBI:57692"/>
    </ligand>
</feature>
<feature type="modified residue" description="Phosphothreonine; by PKC/PRKCB" evidence="5">
    <location>
        <position position="429"/>
    </location>
</feature>
<feature type="glycosylation site" description="N-linked (GlcNAc...) asparagine" evidence="2">
    <location>
        <position position="161"/>
    </location>
</feature>
<feature type="glycosylation site" description="N-linked (GlcNAc...) asparagine" evidence="2">
    <location>
        <position position="241"/>
    </location>
</feature>
<feature type="mutagenesis site" description="No effect on catalytic activity." evidence="5">
    <original>T</original>
    <variation>A</variation>
    <location>
        <position position="89"/>
    </location>
</feature>
<feature type="mutagenesis site" description="Loss of catalytic activity." evidence="5">
    <original>T</original>
    <variation>A</variation>
    <location>
        <position position="429"/>
    </location>
</feature>